<accession>Q3J9C8</accession>
<reference key="1">
    <citation type="journal article" date="2006" name="Appl. Environ. Microbiol.">
        <title>Complete genome sequence of the marine, chemolithoautotrophic, ammonia-oxidizing bacterium Nitrosococcus oceani ATCC 19707.</title>
        <authorList>
            <person name="Klotz M.G."/>
            <person name="Arp D.J."/>
            <person name="Chain P.S.G."/>
            <person name="El-Sheikh A.F."/>
            <person name="Hauser L.J."/>
            <person name="Hommes N.G."/>
            <person name="Larimer F.W."/>
            <person name="Malfatti S.A."/>
            <person name="Norton J.M."/>
            <person name="Poret-Peterson A.T."/>
            <person name="Vergez L.M."/>
            <person name="Ward B.B."/>
        </authorList>
    </citation>
    <scope>NUCLEOTIDE SEQUENCE [LARGE SCALE GENOMIC DNA]</scope>
    <source>
        <strain>ATCC 19707 / BCRC 17464 / JCM 30415 / NCIMB 11848 / C-107</strain>
    </source>
</reference>
<dbReference type="EC" id="6.3.4.5" evidence="1"/>
<dbReference type="EMBL" id="CP000127">
    <property type="protein sequence ID" value="ABA58568.1"/>
    <property type="molecule type" value="Genomic_DNA"/>
</dbReference>
<dbReference type="RefSeq" id="WP_002809303.1">
    <property type="nucleotide sequence ID" value="NC_007484.1"/>
</dbReference>
<dbReference type="SMR" id="Q3J9C8"/>
<dbReference type="FunCoup" id="Q3J9C8">
    <property type="interactions" value="493"/>
</dbReference>
<dbReference type="STRING" id="323261.Noc_2108"/>
<dbReference type="KEGG" id="noc:Noc_2108"/>
<dbReference type="eggNOG" id="COG0137">
    <property type="taxonomic scope" value="Bacteria"/>
</dbReference>
<dbReference type="HOGENOM" id="CLU_032784_4_2_6"/>
<dbReference type="InParanoid" id="Q3J9C8"/>
<dbReference type="UniPathway" id="UPA00068">
    <property type="reaction ID" value="UER00113"/>
</dbReference>
<dbReference type="Proteomes" id="UP000006838">
    <property type="component" value="Chromosome"/>
</dbReference>
<dbReference type="GO" id="GO:0005737">
    <property type="term" value="C:cytoplasm"/>
    <property type="evidence" value="ECO:0007669"/>
    <property type="project" value="UniProtKB-SubCell"/>
</dbReference>
<dbReference type="GO" id="GO:0004055">
    <property type="term" value="F:argininosuccinate synthase activity"/>
    <property type="evidence" value="ECO:0007669"/>
    <property type="project" value="UniProtKB-UniRule"/>
</dbReference>
<dbReference type="GO" id="GO:0005524">
    <property type="term" value="F:ATP binding"/>
    <property type="evidence" value="ECO:0007669"/>
    <property type="project" value="UniProtKB-UniRule"/>
</dbReference>
<dbReference type="GO" id="GO:0000053">
    <property type="term" value="P:argininosuccinate metabolic process"/>
    <property type="evidence" value="ECO:0007669"/>
    <property type="project" value="TreeGrafter"/>
</dbReference>
<dbReference type="GO" id="GO:0006526">
    <property type="term" value="P:L-arginine biosynthetic process"/>
    <property type="evidence" value="ECO:0007669"/>
    <property type="project" value="UniProtKB-UniRule"/>
</dbReference>
<dbReference type="GO" id="GO:0000050">
    <property type="term" value="P:urea cycle"/>
    <property type="evidence" value="ECO:0007669"/>
    <property type="project" value="TreeGrafter"/>
</dbReference>
<dbReference type="CDD" id="cd01999">
    <property type="entry name" value="ASS"/>
    <property type="match status" value="1"/>
</dbReference>
<dbReference type="FunFam" id="1.20.5.470:FF:000001">
    <property type="entry name" value="Argininosuccinate synthase"/>
    <property type="match status" value="1"/>
</dbReference>
<dbReference type="FunFam" id="3.40.50.620:FF:000019">
    <property type="entry name" value="Argininosuccinate synthase"/>
    <property type="match status" value="1"/>
</dbReference>
<dbReference type="FunFam" id="3.90.1260.10:FF:000007">
    <property type="entry name" value="Argininosuccinate synthase"/>
    <property type="match status" value="1"/>
</dbReference>
<dbReference type="Gene3D" id="3.90.1260.10">
    <property type="entry name" value="Argininosuccinate synthetase, chain A, domain 2"/>
    <property type="match status" value="1"/>
</dbReference>
<dbReference type="Gene3D" id="3.40.50.620">
    <property type="entry name" value="HUPs"/>
    <property type="match status" value="1"/>
</dbReference>
<dbReference type="Gene3D" id="1.20.5.470">
    <property type="entry name" value="Single helix bin"/>
    <property type="match status" value="1"/>
</dbReference>
<dbReference type="HAMAP" id="MF_00005">
    <property type="entry name" value="Arg_succ_synth_type1"/>
    <property type="match status" value="1"/>
</dbReference>
<dbReference type="InterPro" id="IPR048268">
    <property type="entry name" value="Arginosuc_syn_C"/>
</dbReference>
<dbReference type="InterPro" id="IPR048267">
    <property type="entry name" value="Arginosuc_syn_N"/>
</dbReference>
<dbReference type="InterPro" id="IPR001518">
    <property type="entry name" value="Arginosuc_synth"/>
</dbReference>
<dbReference type="InterPro" id="IPR018223">
    <property type="entry name" value="Arginosuc_synth_CS"/>
</dbReference>
<dbReference type="InterPro" id="IPR023434">
    <property type="entry name" value="Arginosuc_synth_type_1_subfam"/>
</dbReference>
<dbReference type="InterPro" id="IPR024074">
    <property type="entry name" value="AS_cat/multimer_dom_body"/>
</dbReference>
<dbReference type="InterPro" id="IPR014729">
    <property type="entry name" value="Rossmann-like_a/b/a_fold"/>
</dbReference>
<dbReference type="NCBIfam" id="TIGR00032">
    <property type="entry name" value="argG"/>
    <property type="match status" value="1"/>
</dbReference>
<dbReference type="NCBIfam" id="NF001770">
    <property type="entry name" value="PRK00509.1"/>
    <property type="match status" value="1"/>
</dbReference>
<dbReference type="PANTHER" id="PTHR11587">
    <property type="entry name" value="ARGININOSUCCINATE SYNTHASE"/>
    <property type="match status" value="1"/>
</dbReference>
<dbReference type="PANTHER" id="PTHR11587:SF2">
    <property type="entry name" value="ARGININOSUCCINATE SYNTHASE"/>
    <property type="match status" value="1"/>
</dbReference>
<dbReference type="Pfam" id="PF20979">
    <property type="entry name" value="Arginosuc_syn_C"/>
    <property type="match status" value="1"/>
</dbReference>
<dbReference type="Pfam" id="PF00764">
    <property type="entry name" value="Arginosuc_synth"/>
    <property type="match status" value="1"/>
</dbReference>
<dbReference type="SUPFAM" id="SSF52402">
    <property type="entry name" value="Adenine nucleotide alpha hydrolases-like"/>
    <property type="match status" value="1"/>
</dbReference>
<dbReference type="SUPFAM" id="SSF69864">
    <property type="entry name" value="Argininosuccinate synthetase, C-terminal domain"/>
    <property type="match status" value="1"/>
</dbReference>
<dbReference type="PROSITE" id="PS00564">
    <property type="entry name" value="ARGININOSUCCIN_SYN_1"/>
    <property type="match status" value="1"/>
</dbReference>
<dbReference type="PROSITE" id="PS00565">
    <property type="entry name" value="ARGININOSUCCIN_SYN_2"/>
    <property type="match status" value="1"/>
</dbReference>
<feature type="chain" id="PRO_0000263944" description="Argininosuccinate synthase">
    <location>
        <begin position="1"/>
        <end position="405"/>
    </location>
</feature>
<feature type="binding site" evidence="1">
    <location>
        <begin position="10"/>
        <end position="18"/>
    </location>
    <ligand>
        <name>ATP</name>
        <dbReference type="ChEBI" id="CHEBI:30616"/>
    </ligand>
</feature>
<feature type="binding site" evidence="1">
    <location>
        <position position="37"/>
    </location>
    <ligand>
        <name>ATP</name>
        <dbReference type="ChEBI" id="CHEBI:30616"/>
    </ligand>
</feature>
<feature type="binding site" evidence="1">
    <location>
        <position position="88"/>
    </location>
    <ligand>
        <name>L-citrulline</name>
        <dbReference type="ChEBI" id="CHEBI:57743"/>
    </ligand>
</feature>
<feature type="binding site" evidence="1">
    <location>
        <position position="93"/>
    </location>
    <ligand>
        <name>L-citrulline</name>
        <dbReference type="ChEBI" id="CHEBI:57743"/>
    </ligand>
</feature>
<feature type="binding site" evidence="1">
    <location>
        <position position="118"/>
    </location>
    <ligand>
        <name>ATP</name>
        <dbReference type="ChEBI" id="CHEBI:30616"/>
    </ligand>
</feature>
<feature type="binding site" evidence="1">
    <location>
        <position position="120"/>
    </location>
    <ligand>
        <name>L-aspartate</name>
        <dbReference type="ChEBI" id="CHEBI:29991"/>
    </ligand>
</feature>
<feature type="binding site" evidence="1">
    <location>
        <position position="124"/>
    </location>
    <ligand>
        <name>L-aspartate</name>
        <dbReference type="ChEBI" id="CHEBI:29991"/>
    </ligand>
</feature>
<feature type="binding site" evidence="1">
    <location>
        <position position="124"/>
    </location>
    <ligand>
        <name>L-citrulline</name>
        <dbReference type="ChEBI" id="CHEBI:57743"/>
    </ligand>
</feature>
<feature type="binding site" evidence="1">
    <location>
        <position position="125"/>
    </location>
    <ligand>
        <name>L-aspartate</name>
        <dbReference type="ChEBI" id="CHEBI:29991"/>
    </ligand>
</feature>
<feature type="binding site" evidence="1">
    <location>
        <position position="128"/>
    </location>
    <ligand>
        <name>L-citrulline</name>
        <dbReference type="ChEBI" id="CHEBI:57743"/>
    </ligand>
</feature>
<feature type="binding site" evidence="1">
    <location>
        <position position="179"/>
    </location>
    <ligand>
        <name>L-citrulline</name>
        <dbReference type="ChEBI" id="CHEBI:57743"/>
    </ligand>
</feature>
<feature type="binding site" evidence="1">
    <location>
        <position position="188"/>
    </location>
    <ligand>
        <name>L-citrulline</name>
        <dbReference type="ChEBI" id="CHEBI:57743"/>
    </ligand>
</feature>
<feature type="binding site" evidence="1">
    <location>
        <position position="264"/>
    </location>
    <ligand>
        <name>L-citrulline</name>
        <dbReference type="ChEBI" id="CHEBI:57743"/>
    </ligand>
</feature>
<feature type="binding site" evidence="1">
    <location>
        <position position="276"/>
    </location>
    <ligand>
        <name>L-citrulline</name>
        <dbReference type="ChEBI" id="CHEBI:57743"/>
    </ligand>
</feature>
<gene>
    <name evidence="1" type="primary">argG</name>
    <name type="ordered locus">Noc_2108</name>
</gene>
<comment type="catalytic activity">
    <reaction evidence="1">
        <text>L-citrulline + L-aspartate + ATP = 2-(N(omega)-L-arginino)succinate + AMP + diphosphate + H(+)</text>
        <dbReference type="Rhea" id="RHEA:10932"/>
        <dbReference type="ChEBI" id="CHEBI:15378"/>
        <dbReference type="ChEBI" id="CHEBI:29991"/>
        <dbReference type="ChEBI" id="CHEBI:30616"/>
        <dbReference type="ChEBI" id="CHEBI:33019"/>
        <dbReference type="ChEBI" id="CHEBI:57472"/>
        <dbReference type="ChEBI" id="CHEBI:57743"/>
        <dbReference type="ChEBI" id="CHEBI:456215"/>
        <dbReference type="EC" id="6.3.4.5"/>
    </reaction>
</comment>
<comment type="pathway">
    <text evidence="1">Amino-acid biosynthesis; L-arginine biosynthesis; L-arginine from L-ornithine and carbamoyl phosphate: step 2/3.</text>
</comment>
<comment type="subunit">
    <text evidence="1">Homotetramer.</text>
</comment>
<comment type="subcellular location">
    <subcellularLocation>
        <location evidence="1">Cytoplasm</location>
    </subcellularLocation>
</comment>
<comment type="similarity">
    <text evidence="1">Belongs to the argininosuccinate synthase family. Type 1 subfamily.</text>
</comment>
<name>ASSY_NITOC</name>
<organism>
    <name type="scientific">Nitrosococcus oceani (strain ATCC 19707 / BCRC 17464 / JCM 30415 / NCIMB 11848 / C-107)</name>
    <dbReference type="NCBI Taxonomy" id="323261"/>
    <lineage>
        <taxon>Bacteria</taxon>
        <taxon>Pseudomonadati</taxon>
        <taxon>Pseudomonadota</taxon>
        <taxon>Gammaproteobacteria</taxon>
        <taxon>Chromatiales</taxon>
        <taxon>Chromatiaceae</taxon>
        <taxon>Nitrosococcus</taxon>
    </lineage>
</organism>
<keyword id="KW-0028">Amino-acid biosynthesis</keyword>
<keyword id="KW-0055">Arginine biosynthesis</keyword>
<keyword id="KW-0067">ATP-binding</keyword>
<keyword id="KW-0963">Cytoplasm</keyword>
<keyword id="KW-0436">Ligase</keyword>
<keyword id="KW-0547">Nucleotide-binding</keyword>
<keyword id="KW-1185">Reference proteome</keyword>
<proteinExistence type="inferred from homology"/>
<sequence length="405" mass="45219">MSTIKKVVLAYSGGLDTSVILKWLQETYDCEVVTFTADIGQGEEVAPARAKAETLGVKEIYIEDLREEFCRDYVFPMFRANTLYEGEYLLGTSIARPLIAKRLAEIASATGADAVAHGATGKGNDQVRFELGVYALQPDIQVIAPWREWDLTSREKLLAYAETHGIPVEGKRGGRSPYSMDANLLHISYEGGPLEDPWFEPEESMWRWTTSPEASADQAAYLELDYRCGDIVAINGEVLSPAKVLESLNQLGSKHGIGRLDLVENRYVGMKSRGCYETPAGTIMLKAHRALESLTLDREVTHLKDELMPRYANLIYNGYWWSPERSLLQQLIDGSQVTVNGTVRLKLYKGNVVVVGRRSETDSLFAPEIATFEDDAGAYNQQDAEGFIKLNALRLRIEALKKQTH</sequence>
<evidence type="ECO:0000255" key="1">
    <source>
        <dbReference type="HAMAP-Rule" id="MF_00005"/>
    </source>
</evidence>
<protein>
    <recommendedName>
        <fullName evidence="1">Argininosuccinate synthase</fullName>
        <ecNumber evidence="1">6.3.4.5</ecNumber>
    </recommendedName>
    <alternativeName>
        <fullName evidence="1">Citrulline--aspartate ligase</fullName>
    </alternativeName>
</protein>